<protein>
    <recommendedName>
        <fullName>Dihydrofolate reductase</fullName>
        <ecNumber>1.5.1.3</ecNumber>
    </recommendedName>
</protein>
<accession>Q07801</accession>
<accession>Q5KAF0</accession>
<proteinExistence type="evidence at protein level"/>
<evidence type="ECO:0000250" key="1"/>
<evidence type="ECO:0000255" key="2">
    <source>
        <dbReference type="PROSITE-ProRule" id="PRU00660"/>
    </source>
</evidence>
<evidence type="ECO:0000305" key="3"/>
<feature type="chain" id="PRO_0000186375" description="Dihydrofolate reductase">
    <location>
        <begin position="1"/>
        <end position="229"/>
    </location>
</feature>
<feature type="domain" description="DHFR" evidence="2">
    <location>
        <begin position="11"/>
        <end position="227"/>
    </location>
</feature>
<feature type="binding site" evidence="1">
    <location>
        <position position="17"/>
    </location>
    <ligand>
        <name>NADP(+)</name>
        <dbReference type="ChEBI" id="CHEBI:58349"/>
    </ligand>
</feature>
<feature type="binding site" evidence="1">
    <location>
        <begin position="23"/>
        <end position="29"/>
    </location>
    <ligand>
        <name>NADP(+)</name>
        <dbReference type="ChEBI" id="CHEBI:58349"/>
    </ligand>
</feature>
<feature type="binding site" evidence="1">
    <location>
        <begin position="37"/>
        <end position="42"/>
    </location>
    <ligand>
        <name>substrate</name>
    </ligand>
</feature>
<feature type="binding site" evidence="1">
    <location>
        <begin position="64"/>
        <end position="66"/>
    </location>
    <ligand>
        <name>NADP(+)</name>
        <dbReference type="ChEBI" id="CHEBI:58349"/>
    </ligand>
</feature>
<feature type="binding site" evidence="1">
    <location>
        <position position="80"/>
    </location>
    <ligand>
        <name>substrate</name>
    </ligand>
</feature>
<feature type="binding site" evidence="1">
    <location>
        <begin position="86"/>
        <end position="88"/>
    </location>
    <ligand>
        <name>NADP(+)</name>
        <dbReference type="ChEBI" id="CHEBI:58349"/>
    </ligand>
</feature>
<feature type="binding site" evidence="1">
    <location>
        <begin position="127"/>
        <end position="134"/>
    </location>
    <ligand>
        <name>NADP(+)</name>
        <dbReference type="ChEBI" id="CHEBI:58349"/>
    </ligand>
</feature>
<organism>
    <name type="scientific">Cryptococcus neoformans var. neoformans serotype D (strain JEC21 / ATCC MYA-565)</name>
    <name type="common">Filobasidiella neoformans</name>
    <dbReference type="NCBI Taxonomy" id="214684"/>
    <lineage>
        <taxon>Eukaryota</taxon>
        <taxon>Fungi</taxon>
        <taxon>Dikarya</taxon>
        <taxon>Basidiomycota</taxon>
        <taxon>Agaricomycotina</taxon>
        <taxon>Tremellomycetes</taxon>
        <taxon>Tremellales</taxon>
        <taxon>Cryptococcaceae</taxon>
        <taxon>Cryptococcus</taxon>
        <taxon>Cryptococcus neoformans species complex</taxon>
    </lineage>
</organism>
<name>DYR_CRYNJ</name>
<comment type="function">
    <text evidence="1">Key enzyme in folate metabolism. Catalyzes an essential reaction for de novo glycine and purine synthesis, and for DNA precursor synthesis (By similarity).</text>
</comment>
<comment type="catalytic activity">
    <reaction evidence="2">
        <text>(6S)-5,6,7,8-tetrahydrofolate + NADP(+) = 7,8-dihydrofolate + NADPH + H(+)</text>
        <dbReference type="Rhea" id="RHEA:15009"/>
        <dbReference type="ChEBI" id="CHEBI:15378"/>
        <dbReference type="ChEBI" id="CHEBI:57451"/>
        <dbReference type="ChEBI" id="CHEBI:57453"/>
        <dbReference type="ChEBI" id="CHEBI:57783"/>
        <dbReference type="ChEBI" id="CHEBI:58349"/>
        <dbReference type="EC" id="1.5.1.3"/>
    </reaction>
</comment>
<comment type="pathway">
    <text>Cofactor biosynthesis; tetrahydrofolate biosynthesis; 5,6,7,8-tetrahydrofolate from 7,8-dihydrofolate: step 1/1.</text>
</comment>
<comment type="subunit">
    <text>Monomer.</text>
</comment>
<comment type="similarity">
    <text evidence="3">Belongs to the dihydrofolate reductase family.</text>
</comment>
<comment type="sequence caution" evidence="3">
    <conflict type="erroneous initiation">
        <sequence resource="EMBL-CDS" id="AAW45849"/>
    </conflict>
</comment>
<sequence>MQTTAKSSTPSITAVVAATAENGIGLNGGLPWRLPGEMKYFARVTTGETPSSDPSEQNVVIMGRKTWESIPSRFRPLKNRRNVVISGKGVDLGTAENSTVYTDIPSALSALRSTTESGHSPRIFLIGGATLYTSSLLPSSVPSLNSSTSTSPLPFSRPLIDRILLTRILSPFECDAYLEDFAAHTKPDGSKVWKKASIKEFREWIGWDIEEQVEEKGVKYIFEMWVLNQ</sequence>
<gene>
    <name type="primary">DFR1</name>
    <name type="synonym">DHFR</name>
    <name type="ordered locus">CNJ01940</name>
</gene>
<reference key="1">
    <citation type="journal article" date="1993" name="J. Biol. Chem.">
        <title>Cloning, expression, and characterization of Cryptococcus neoformans dihydrofolate reductase.</title>
        <authorList>
            <person name="Sirawaraporn W."/>
            <person name="Cao M."/>
            <person name="Santi D.V."/>
            <person name="Edman J.C."/>
        </authorList>
    </citation>
    <scope>NUCLEOTIDE SEQUENCE [GENOMIC DNA]</scope>
    <scope>PROTEIN SEQUENCE OF 1-6</scope>
    <scope>CHARACTERIZATION</scope>
</reference>
<reference key="2">
    <citation type="journal article" date="2005" name="Science">
        <title>The genome of the basidiomycetous yeast and human pathogen Cryptococcus neoformans.</title>
        <authorList>
            <person name="Loftus B.J."/>
            <person name="Fung E."/>
            <person name="Roncaglia P."/>
            <person name="Rowley D."/>
            <person name="Amedeo P."/>
            <person name="Bruno D."/>
            <person name="Vamathevan J."/>
            <person name="Miranda M."/>
            <person name="Anderson I.J."/>
            <person name="Fraser J.A."/>
            <person name="Allen J.E."/>
            <person name="Bosdet I.E."/>
            <person name="Brent M.R."/>
            <person name="Chiu R."/>
            <person name="Doering T.L."/>
            <person name="Donlin M.J."/>
            <person name="D'Souza C.A."/>
            <person name="Fox D.S."/>
            <person name="Grinberg V."/>
            <person name="Fu J."/>
            <person name="Fukushima M."/>
            <person name="Haas B.J."/>
            <person name="Huang J.C."/>
            <person name="Janbon G."/>
            <person name="Jones S.J.M."/>
            <person name="Koo H.L."/>
            <person name="Krzywinski M.I."/>
            <person name="Kwon-Chung K.J."/>
            <person name="Lengeler K.B."/>
            <person name="Maiti R."/>
            <person name="Marra M.A."/>
            <person name="Marra R.E."/>
            <person name="Mathewson C.A."/>
            <person name="Mitchell T.G."/>
            <person name="Pertea M."/>
            <person name="Riggs F.R."/>
            <person name="Salzberg S.L."/>
            <person name="Schein J.E."/>
            <person name="Shvartsbeyn A."/>
            <person name="Shin H."/>
            <person name="Shumway M."/>
            <person name="Specht C.A."/>
            <person name="Suh B.B."/>
            <person name="Tenney A."/>
            <person name="Utterback T.R."/>
            <person name="Wickes B.L."/>
            <person name="Wortman J.R."/>
            <person name="Wye N.H."/>
            <person name="Kronstad J.W."/>
            <person name="Lodge J.K."/>
            <person name="Heitman J."/>
            <person name="Davis R.W."/>
            <person name="Fraser C.M."/>
            <person name="Hyman R.W."/>
        </authorList>
    </citation>
    <scope>NUCLEOTIDE SEQUENCE [LARGE SCALE GENOMIC DNA]</scope>
    <source>
        <strain>JEC21 / ATCC MYA-565</strain>
    </source>
</reference>
<dbReference type="EC" id="1.5.1.3"/>
<dbReference type="EMBL" id="S58802">
    <property type="protein sequence ID" value="AAB26198.1"/>
    <property type="molecule type" value="Genomic_DNA"/>
</dbReference>
<dbReference type="EMBL" id="AE017350">
    <property type="protein sequence ID" value="AAW45849.1"/>
    <property type="status" value="ALT_INIT"/>
    <property type="molecule type" value="Genomic_DNA"/>
</dbReference>
<dbReference type="PIR" id="A46049">
    <property type="entry name" value="A46049"/>
</dbReference>
<dbReference type="RefSeq" id="XP_567366.1">
    <property type="nucleotide sequence ID" value="XM_567366.1"/>
</dbReference>
<dbReference type="SMR" id="Q07801"/>
<dbReference type="STRING" id="214684.Q07801"/>
<dbReference type="PaxDb" id="214684-Q07801"/>
<dbReference type="EnsemblFungi" id="AAW45849">
    <property type="protein sequence ID" value="AAW45849"/>
    <property type="gene ID" value="CNJ01940"/>
</dbReference>
<dbReference type="GeneID" id="3254250"/>
<dbReference type="KEGG" id="cne:CNJ01940"/>
<dbReference type="eggNOG" id="KOG1324">
    <property type="taxonomic scope" value="Eukaryota"/>
</dbReference>
<dbReference type="InParanoid" id="Q07801"/>
<dbReference type="OrthoDB" id="414698at2759"/>
<dbReference type="UniPathway" id="UPA00077">
    <property type="reaction ID" value="UER00158"/>
</dbReference>
<dbReference type="Proteomes" id="UP000002149">
    <property type="component" value="Chromosome 10"/>
</dbReference>
<dbReference type="GO" id="GO:0005739">
    <property type="term" value="C:mitochondrion"/>
    <property type="evidence" value="ECO:0000318"/>
    <property type="project" value="GO_Central"/>
</dbReference>
<dbReference type="GO" id="GO:0004146">
    <property type="term" value="F:dihydrofolate reductase activity"/>
    <property type="evidence" value="ECO:0000318"/>
    <property type="project" value="GO_Central"/>
</dbReference>
<dbReference type="GO" id="GO:0050661">
    <property type="term" value="F:NADP binding"/>
    <property type="evidence" value="ECO:0000318"/>
    <property type="project" value="GO_Central"/>
</dbReference>
<dbReference type="GO" id="GO:0046452">
    <property type="term" value="P:dihydrofolate metabolic process"/>
    <property type="evidence" value="ECO:0000318"/>
    <property type="project" value="GO_Central"/>
</dbReference>
<dbReference type="GO" id="GO:0046655">
    <property type="term" value="P:folic acid metabolic process"/>
    <property type="evidence" value="ECO:0000318"/>
    <property type="project" value="GO_Central"/>
</dbReference>
<dbReference type="GO" id="GO:0006730">
    <property type="term" value="P:one-carbon metabolic process"/>
    <property type="evidence" value="ECO:0007669"/>
    <property type="project" value="UniProtKB-KW"/>
</dbReference>
<dbReference type="GO" id="GO:0046654">
    <property type="term" value="P:tetrahydrofolate biosynthetic process"/>
    <property type="evidence" value="ECO:0000318"/>
    <property type="project" value="GO_Central"/>
</dbReference>
<dbReference type="CDD" id="cd00209">
    <property type="entry name" value="DHFR"/>
    <property type="match status" value="1"/>
</dbReference>
<dbReference type="FunFam" id="3.40.430.10:FF:000020">
    <property type="entry name" value="Dihydrofolate reductase"/>
    <property type="match status" value="1"/>
</dbReference>
<dbReference type="Gene3D" id="3.40.430.10">
    <property type="entry name" value="Dihydrofolate Reductase, subunit A"/>
    <property type="match status" value="1"/>
</dbReference>
<dbReference type="InterPro" id="IPR012259">
    <property type="entry name" value="DHFR"/>
</dbReference>
<dbReference type="InterPro" id="IPR024072">
    <property type="entry name" value="DHFR-like_dom_sf"/>
</dbReference>
<dbReference type="InterPro" id="IPR017925">
    <property type="entry name" value="DHFR_CS"/>
</dbReference>
<dbReference type="InterPro" id="IPR001796">
    <property type="entry name" value="DHFR_dom"/>
</dbReference>
<dbReference type="PANTHER" id="PTHR48069">
    <property type="entry name" value="DIHYDROFOLATE REDUCTASE"/>
    <property type="match status" value="1"/>
</dbReference>
<dbReference type="PANTHER" id="PTHR48069:SF3">
    <property type="entry name" value="DIHYDROFOLATE REDUCTASE"/>
    <property type="match status" value="1"/>
</dbReference>
<dbReference type="Pfam" id="PF00186">
    <property type="entry name" value="DHFR_1"/>
    <property type="match status" value="1"/>
</dbReference>
<dbReference type="PRINTS" id="PR00070">
    <property type="entry name" value="DHFR"/>
</dbReference>
<dbReference type="SUPFAM" id="SSF53597">
    <property type="entry name" value="Dihydrofolate reductase-like"/>
    <property type="match status" value="1"/>
</dbReference>
<dbReference type="PROSITE" id="PS00075">
    <property type="entry name" value="DHFR_1"/>
    <property type="match status" value="1"/>
</dbReference>
<dbReference type="PROSITE" id="PS51330">
    <property type="entry name" value="DHFR_2"/>
    <property type="match status" value="1"/>
</dbReference>
<keyword id="KW-0903">Direct protein sequencing</keyword>
<keyword id="KW-0521">NADP</keyword>
<keyword id="KW-0554">One-carbon metabolism</keyword>
<keyword id="KW-0560">Oxidoreductase</keyword>
<keyword id="KW-1185">Reference proteome</keyword>